<keyword id="KW-0210">Decarboxylase</keyword>
<keyword id="KW-0456">Lyase</keyword>
<keyword id="KW-0665">Pyrimidine biosynthesis</keyword>
<gene>
    <name evidence="1" type="primary">pyrF</name>
    <name type="ordered locus">LPC_0841</name>
</gene>
<name>PYRF_LEGPC</name>
<proteinExistence type="inferred from homology"/>
<accession>A5IBR7</accession>
<evidence type="ECO:0000255" key="1">
    <source>
        <dbReference type="HAMAP-Rule" id="MF_01200"/>
    </source>
</evidence>
<comment type="function">
    <text evidence="1">Catalyzes the decarboxylation of orotidine 5'-monophosphate (OMP) to uridine 5'-monophosphate (UMP).</text>
</comment>
<comment type="catalytic activity">
    <reaction evidence="1">
        <text>orotidine 5'-phosphate + H(+) = UMP + CO2</text>
        <dbReference type="Rhea" id="RHEA:11596"/>
        <dbReference type="ChEBI" id="CHEBI:15378"/>
        <dbReference type="ChEBI" id="CHEBI:16526"/>
        <dbReference type="ChEBI" id="CHEBI:57538"/>
        <dbReference type="ChEBI" id="CHEBI:57865"/>
        <dbReference type="EC" id="4.1.1.23"/>
    </reaction>
</comment>
<comment type="pathway">
    <text evidence="1">Pyrimidine metabolism; UMP biosynthesis via de novo pathway; UMP from orotate: step 2/2.</text>
</comment>
<comment type="subunit">
    <text evidence="1">Homodimer.</text>
</comment>
<comment type="similarity">
    <text evidence="1">Belongs to the OMP decarboxylase family. Type 1 subfamily.</text>
</comment>
<dbReference type="EC" id="4.1.1.23" evidence="1"/>
<dbReference type="EMBL" id="CP000675">
    <property type="protein sequence ID" value="ABQ54817.1"/>
    <property type="molecule type" value="Genomic_DNA"/>
</dbReference>
<dbReference type="RefSeq" id="WP_011946438.1">
    <property type="nucleotide sequence ID" value="NZ_JAPMSS010000002.1"/>
</dbReference>
<dbReference type="SMR" id="A5IBR7"/>
<dbReference type="KEGG" id="lpc:LPC_0841"/>
<dbReference type="HOGENOM" id="CLU_067069_0_0_6"/>
<dbReference type="UniPathway" id="UPA00070">
    <property type="reaction ID" value="UER00120"/>
</dbReference>
<dbReference type="GO" id="GO:0005829">
    <property type="term" value="C:cytosol"/>
    <property type="evidence" value="ECO:0007669"/>
    <property type="project" value="TreeGrafter"/>
</dbReference>
<dbReference type="GO" id="GO:0004590">
    <property type="term" value="F:orotidine-5'-phosphate decarboxylase activity"/>
    <property type="evidence" value="ECO:0007669"/>
    <property type="project" value="UniProtKB-UniRule"/>
</dbReference>
<dbReference type="GO" id="GO:0006207">
    <property type="term" value="P:'de novo' pyrimidine nucleobase biosynthetic process"/>
    <property type="evidence" value="ECO:0007669"/>
    <property type="project" value="InterPro"/>
</dbReference>
<dbReference type="GO" id="GO:0044205">
    <property type="term" value="P:'de novo' UMP biosynthetic process"/>
    <property type="evidence" value="ECO:0007669"/>
    <property type="project" value="UniProtKB-UniRule"/>
</dbReference>
<dbReference type="CDD" id="cd04725">
    <property type="entry name" value="OMP_decarboxylase_like"/>
    <property type="match status" value="1"/>
</dbReference>
<dbReference type="FunFam" id="3.20.20.70:FF:000015">
    <property type="entry name" value="Orotidine 5'-phosphate decarboxylase"/>
    <property type="match status" value="1"/>
</dbReference>
<dbReference type="Gene3D" id="3.20.20.70">
    <property type="entry name" value="Aldolase class I"/>
    <property type="match status" value="1"/>
</dbReference>
<dbReference type="HAMAP" id="MF_01200_B">
    <property type="entry name" value="OMPdecase_type1_B"/>
    <property type="match status" value="1"/>
</dbReference>
<dbReference type="InterPro" id="IPR013785">
    <property type="entry name" value="Aldolase_TIM"/>
</dbReference>
<dbReference type="InterPro" id="IPR014732">
    <property type="entry name" value="OMPdecase"/>
</dbReference>
<dbReference type="InterPro" id="IPR018089">
    <property type="entry name" value="OMPdecase_AS"/>
</dbReference>
<dbReference type="InterPro" id="IPR047596">
    <property type="entry name" value="OMPdecase_bac"/>
</dbReference>
<dbReference type="InterPro" id="IPR001754">
    <property type="entry name" value="OMPdeCOase_dom"/>
</dbReference>
<dbReference type="InterPro" id="IPR011060">
    <property type="entry name" value="RibuloseP-bd_barrel"/>
</dbReference>
<dbReference type="NCBIfam" id="NF001273">
    <property type="entry name" value="PRK00230.1"/>
    <property type="match status" value="1"/>
</dbReference>
<dbReference type="NCBIfam" id="TIGR01740">
    <property type="entry name" value="pyrF"/>
    <property type="match status" value="1"/>
</dbReference>
<dbReference type="PANTHER" id="PTHR32119">
    <property type="entry name" value="OROTIDINE 5'-PHOSPHATE DECARBOXYLASE"/>
    <property type="match status" value="1"/>
</dbReference>
<dbReference type="PANTHER" id="PTHR32119:SF2">
    <property type="entry name" value="OROTIDINE 5'-PHOSPHATE DECARBOXYLASE"/>
    <property type="match status" value="1"/>
</dbReference>
<dbReference type="Pfam" id="PF00215">
    <property type="entry name" value="OMPdecase"/>
    <property type="match status" value="1"/>
</dbReference>
<dbReference type="SMART" id="SM00934">
    <property type="entry name" value="OMPdecase"/>
    <property type="match status" value="1"/>
</dbReference>
<dbReference type="SUPFAM" id="SSF51366">
    <property type="entry name" value="Ribulose-phoshate binding barrel"/>
    <property type="match status" value="1"/>
</dbReference>
<dbReference type="PROSITE" id="PS00156">
    <property type="entry name" value="OMPDECASE"/>
    <property type="match status" value="1"/>
</dbReference>
<protein>
    <recommendedName>
        <fullName evidence="1">Orotidine 5'-phosphate decarboxylase</fullName>
        <ecNumber evidence="1">4.1.1.23</ecNumber>
    </recommendedName>
    <alternativeName>
        <fullName evidence="1">OMP decarboxylase</fullName>
        <shortName evidence="1">OMPDCase</shortName>
        <shortName evidence="1">OMPdecase</shortName>
    </alternativeName>
</protein>
<reference key="1">
    <citation type="submission" date="2006-11" db="EMBL/GenBank/DDBJ databases">
        <title>Identification and characterization of a new conjugation/ type IVA secretion system (trb/tra) of L. pneumophila Corby localized on a mobile genomic island.</title>
        <authorList>
            <person name="Gloeckner G."/>
            <person name="Albert-Weissenberger C."/>
            <person name="Weinmann E."/>
            <person name="Jacobi S."/>
            <person name="Schunder E."/>
            <person name="Steinert M."/>
            <person name="Buchrieser C."/>
            <person name="Hacker J."/>
            <person name="Heuner K."/>
        </authorList>
    </citation>
    <scope>NUCLEOTIDE SEQUENCE [LARGE SCALE GENOMIC DNA]</scope>
    <source>
        <strain>Corby</strain>
    </source>
</reference>
<sequence length="229" mass="25113">MTPKLIVALDFDNQDNALQLVEKLDPNHCALKVGSELFTLLGPQFVKELVRREFKVFLDLKFHDIPNTVAKACHSAAELGVWMMNVHAIGGLKMLQAARESLKTYGKDKPLLIAVTVLTSFEEAELASVGISNTLPEQATHLAMLAREAGLDGVVSSAHEVKIIKQKCGENFITVTPGIRLPNNLKDDQSRVMTPQQAIREGSDFLVIGRPITQASNPHEVVSALLRDL</sequence>
<feature type="chain" id="PRO_1000065917" description="Orotidine 5'-phosphate decarboxylase">
    <location>
        <begin position="1"/>
        <end position="229"/>
    </location>
</feature>
<feature type="active site" description="Proton donor" evidence="1">
    <location>
        <position position="61"/>
    </location>
</feature>
<feature type="binding site" evidence="1">
    <location>
        <position position="10"/>
    </location>
    <ligand>
        <name>substrate</name>
    </ligand>
</feature>
<feature type="binding site" evidence="1">
    <location>
        <position position="32"/>
    </location>
    <ligand>
        <name>substrate</name>
    </ligand>
</feature>
<feature type="binding site" evidence="1">
    <location>
        <begin position="59"/>
        <end position="68"/>
    </location>
    <ligand>
        <name>substrate</name>
    </ligand>
</feature>
<feature type="binding site" evidence="1">
    <location>
        <position position="119"/>
    </location>
    <ligand>
        <name>substrate</name>
    </ligand>
</feature>
<feature type="binding site" evidence="1">
    <location>
        <position position="180"/>
    </location>
    <ligand>
        <name>substrate</name>
    </ligand>
</feature>
<feature type="binding site" evidence="1">
    <location>
        <position position="189"/>
    </location>
    <ligand>
        <name>substrate</name>
    </ligand>
</feature>
<feature type="binding site" evidence="1">
    <location>
        <position position="209"/>
    </location>
    <ligand>
        <name>substrate</name>
    </ligand>
</feature>
<feature type="binding site" evidence="1">
    <location>
        <position position="210"/>
    </location>
    <ligand>
        <name>substrate</name>
    </ligand>
</feature>
<organism>
    <name type="scientific">Legionella pneumophila (strain Corby)</name>
    <dbReference type="NCBI Taxonomy" id="400673"/>
    <lineage>
        <taxon>Bacteria</taxon>
        <taxon>Pseudomonadati</taxon>
        <taxon>Pseudomonadota</taxon>
        <taxon>Gammaproteobacteria</taxon>
        <taxon>Legionellales</taxon>
        <taxon>Legionellaceae</taxon>
        <taxon>Legionella</taxon>
    </lineage>
</organism>